<name>FSA_SALHS</name>
<protein>
    <recommendedName>
        <fullName evidence="1">Fructose-6-phosphate aldolase</fullName>
        <ecNumber evidence="1">4.1.2.-</ecNumber>
    </recommendedName>
</protein>
<gene>
    <name evidence="1" type="primary">fsa</name>
    <name type="ordered locus">SeHA_C4444</name>
</gene>
<organism>
    <name type="scientific">Salmonella heidelberg (strain SL476)</name>
    <dbReference type="NCBI Taxonomy" id="454169"/>
    <lineage>
        <taxon>Bacteria</taxon>
        <taxon>Pseudomonadati</taxon>
        <taxon>Pseudomonadota</taxon>
        <taxon>Gammaproteobacteria</taxon>
        <taxon>Enterobacterales</taxon>
        <taxon>Enterobacteriaceae</taxon>
        <taxon>Salmonella</taxon>
    </lineage>
</organism>
<feature type="chain" id="PRO_1000126377" description="Fructose-6-phosphate aldolase">
    <location>
        <begin position="1"/>
        <end position="220"/>
    </location>
</feature>
<feature type="active site" description="Schiff-base intermediate with substrate" evidence="1">
    <location>
        <position position="85"/>
    </location>
</feature>
<proteinExistence type="inferred from homology"/>
<evidence type="ECO:0000255" key="1">
    <source>
        <dbReference type="HAMAP-Rule" id="MF_00496"/>
    </source>
</evidence>
<keyword id="KW-0119">Carbohydrate metabolism</keyword>
<keyword id="KW-0963">Cytoplasm</keyword>
<keyword id="KW-0456">Lyase</keyword>
<keyword id="KW-0704">Schiff base</keyword>
<accession>B4TCP9</accession>
<comment type="function">
    <text evidence="1">Catalyzes the reversible formation of fructose 6-phosphate from dihydroxyacetone and D-glyceraldehyde 3-phosphate via an aldolization reaction.</text>
</comment>
<comment type="catalytic activity">
    <reaction evidence="1">
        <text>beta-D-fructose 6-phosphate = dihydroxyacetone + D-glyceraldehyde 3-phosphate</text>
        <dbReference type="Rhea" id="RHEA:28002"/>
        <dbReference type="ChEBI" id="CHEBI:16016"/>
        <dbReference type="ChEBI" id="CHEBI:57634"/>
        <dbReference type="ChEBI" id="CHEBI:59776"/>
    </reaction>
</comment>
<comment type="subunit">
    <text evidence="1">Homodecamer.</text>
</comment>
<comment type="subcellular location">
    <subcellularLocation>
        <location evidence="1">Cytoplasm</location>
    </subcellularLocation>
</comment>
<comment type="similarity">
    <text evidence="1">Belongs to the transaldolase family. Type 3A subfamily.</text>
</comment>
<sequence>MELYLDTANVAEVERLAHIFPIAGVTTNPSIVAASKESIWDVLPRLQNAIGEEGTLFAQTMSRDAKGMVEEAKRLNNAIPGIVVKIPVTAEGLAAIKLLKKEGIVTLGTAVYSASQGLLAALAGAKYVAPYVNRVDAQGGDGIRMVQELQTLLEHHAPDSMVLAASFKTPRQALDCLLAGCQAITLPLDVAQQMLNTPAVESAIEKFEQDWKNAFGNLNL</sequence>
<dbReference type="EC" id="4.1.2.-" evidence="1"/>
<dbReference type="EMBL" id="CP001120">
    <property type="protein sequence ID" value="ACF66675.1"/>
    <property type="molecule type" value="Genomic_DNA"/>
</dbReference>
<dbReference type="RefSeq" id="WP_000424826.1">
    <property type="nucleotide sequence ID" value="NC_011083.1"/>
</dbReference>
<dbReference type="SMR" id="B4TCP9"/>
<dbReference type="KEGG" id="seh:SeHA_C4444"/>
<dbReference type="HOGENOM" id="CLU_079764_2_0_6"/>
<dbReference type="Proteomes" id="UP000001866">
    <property type="component" value="Chromosome"/>
</dbReference>
<dbReference type="GO" id="GO:0005737">
    <property type="term" value="C:cytoplasm"/>
    <property type="evidence" value="ECO:0007669"/>
    <property type="project" value="UniProtKB-SubCell"/>
</dbReference>
<dbReference type="GO" id="GO:0097023">
    <property type="term" value="F:fructose 6-phosphate aldolase activity"/>
    <property type="evidence" value="ECO:0007669"/>
    <property type="project" value="RHEA"/>
</dbReference>
<dbReference type="GO" id="GO:0006000">
    <property type="term" value="P:fructose metabolic process"/>
    <property type="evidence" value="ECO:0007669"/>
    <property type="project" value="UniProtKB-UniRule"/>
</dbReference>
<dbReference type="CDD" id="cd00956">
    <property type="entry name" value="Transaldolase_FSA"/>
    <property type="match status" value="1"/>
</dbReference>
<dbReference type="FunFam" id="3.20.20.70:FF:000018">
    <property type="entry name" value="Probable transaldolase"/>
    <property type="match status" value="1"/>
</dbReference>
<dbReference type="Gene3D" id="3.20.20.70">
    <property type="entry name" value="Aldolase class I"/>
    <property type="match status" value="1"/>
</dbReference>
<dbReference type="HAMAP" id="MF_00496">
    <property type="entry name" value="F6P_aldolase"/>
    <property type="match status" value="1"/>
</dbReference>
<dbReference type="InterPro" id="IPR013785">
    <property type="entry name" value="Aldolase_TIM"/>
</dbReference>
<dbReference type="InterPro" id="IPR023001">
    <property type="entry name" value="F6P_aldolase"/>
</dbReference>
<dbReference type="InterPro" id="IPR001585">
    <property type="entry name" value="TAL/FSA"/>
</dbReference>
<dbReference type="InterPro" id="IPR004731">
    <property type="entry name" value="Transaldolase_3B/F6P_aldolase"/>
</dbReference>
<dbReference type="InterPro" id="IPR018225">
    <property type="entry name" value="Transaldolase_AS"/>
</dbReference>
<dbReference type="InterPro" id="IPR033919">
    <property type="entry name" value="TSA/FSA_arc/bac"/>
</dbReference>
<dbReference type="NCBIfam" id="TIGR00875">
    <property type="entry name" value="fsa_talC_mipB"/>
    <property type="match status" value="1"/>
</dbReference>
<dbReference type="NCBIfam" id="NF009296">
    <property type="entry name" value="PRK12653.1"/>
    <property type="match status" value="1"/>
</dbReference>
<dbReference type="PANTHER" id="PTHR10683:SF40">
    <property type="entry name" value="FRUCTOSE-6-PHOSPHATE ALDOLASE 1-RELATED"/>
    <property type="match status" value="1"/>
</dbReference>
<dbReference type="PANTHER" id="PTHR10683">
    <property type="entry name" value="TRANSALDOLASE"/>
    <property type="match status" value="1"/>
</dbReference>
<dbReference type="Pfam" id="PF00923">
    <property type="entry name" value="TAL_FSA"/>
    <property type="match status" value="1"/>
</dbReference>
<dbReference type="SUPFAM" id="SSF51569">
    <property type="entry name" value="Aldolase"/>
    <property type="match status" value="1"/>
</dbReference>
<dbReference type="PROSITE" id="PS01054">
    <property type="entry name" value="TRANSALDOLASE_1"/>
    <property type="match status" value="1"/>
</dbReference>
<dbReference type="PROSITE" id="PS00958">
    <property type="entry name" value="TRANSALDOLASE_2"/>
    <property type="match status" value="1"/>
</dbReference>
<reference key="1">
    <citation type="journal article" date="2011" name="J. Bacteriol.">
        <title>Comparative genomics of 28 Salmonella enterica isolates: evidence for CRISPR-mediated adaptive sublineage evolution.</title>
        <authorList>
            <person name="Fricke W.F."/>
            <person name="Mammel M.K."/>
            <person name="McDermott P.F."/>
            <person name="Tartera C."/>
            <person name="White D.G."/>
            <person name="Leclerc J.E."/>
            <person name="Ravel J."/>
            <person name="Cebula T.A."/>
        </authorList>
    </citation>
    <scope>NUCLEOTIDE SEQUENCE [LARGE SCALE GENOMIC DNA]</scope>
    <source>
        <strain>SL476</strain>
    </source>
</reference>